<accession>B0BML7</accession>
<protein>
    <recommendedName>
        <fullName>Sepiapterin reductase</fullName>
        <shortName>SPR</shortName>
        <ecNumber>1.1.1.153</ecNumber>
    </recommendedName>
</protein>
<name>SPRE_XENTR</name>
<feature type="chain" id="PRO_0000327644" description="Sepiapterin reductase">
    <location>
        <begin position="1"/>
        <end position="261"/>
    </location>
</feature>
<feature type="binding site" evidence="1">
    <location>
        <begin position="16"/>
        <end position="22"/>
    </location>
    <ligand>
        <name>NADP(+)</name>
        <dbReference type="ChEBI" id="CHEBI:58349"/>
    </ligand>
</feature>
<feature type="binding site" evidence="1">
    <location>
        <begin position="44"/>
        <end position="45"/>
    </location>
    <ligand>
        <name>NADP(+)</name>
        <dbReference type="ChEBI" id="CHEBI:58349"/>
    </ligand>
</feature>
<feature type="binding site" evidence="1">
    <location>
        <begin position="71"/>
        <end position="72"/>
    </location>
    <ligand>
        <name>NADP(+)</name>
        <dbReference type="ChEBI" id="CHEBI:58349"/>
    </ligand>
</feature>
<feature type="binding site" evidence="1">
    <location>
        <begin position="158"/>
        <end position="159"/>
    </location>
    <ligand>
        <name>substrate</name>
    </ligand>
</feature>
<feature type="binding site" evidence="1">
    <location>
        <position position="171"/>
    </location>
    <ligand>
        <name>substrate</name>
    </ligand>
</feature>
<feature type="binding site" evidence="1">
    <location>
        <position position="175"/>
    </location>
    <ligand>
        <name>NADP(+)</name>
        <dbReference type="ChEBI" id="CHEBI:58349"/>
    </ligand>
</feature>
<feature type="binding site" evidence="1">
    <location>
        <position position="200"/>
    </location>
    <ligand>
        <name>substrate</name>
    </ligand>
</feature>
<feature type="binding site" evidence="1">
    <location>
        <begin position="202"/>
        <end position="207"/>
    </location>
    <ligand>
        <name>NADP(+)</name>
        <dbReference type="ChEBI" id="CHEBI:58349"/>
    </ligand>
</feature>
<feature type="binding site" evidence="1">
    <location>
        <position position="258"/>
    </location>
    <ligand>
        <name>substrate</name>
    </ligand>
</feature>
<comment type="function">
    <text evidence="1">Catalyzes the final one or two reductions in tetra-hydrobiopterin biosynthesis to form 5,6,7,8-tetrahydrobiopterin.</text>
</comment>
<comment type="catalytic activity">
    <reaction>
        <text>L-erythro-7,8-dihydrobiopterin + NADP(+) = L-sepiapterin + NADPH + H(+)</text>
        <dbReference type="Rhea" id="RHEA:18953"/>
        <dbReference type="ChEBI" id="CHEBI:15378"/>
        <dbReference type="ChEBI" id="CHEBI:43029"/>
        <dbReference type="ChEBI" id="CHEBI:57783"/>
        <dbReference type="ChEBI" id="CHEBI:58349"/>
        <dbReference type="ChEBI" id="CHEBI:194527"/>
        <dbReference type="EC" id="1.1.1.153"/>
    </reaction>
</comment>
<comment type="catalytic activity">
    <reaction>
        <text>(6R)-L-erythro-5,6,7,8-tetrahydrobiopterin + 2 NADP(+) = 6-pyruvoyl-5,6,7,8-tetrahydropterin + 2 NADPH + 2 H(+)</text>
        <dbReference type="Rhea" id="RHEA:32627"/>
        <dbReference type="ChEBI" id="CHEBI:15378"/>
        <dbReference type="ChEBI" id="CHEBI:57783"/>
        <dbReference type="ChEBI" id="CHEBI:58349"/>
        <dbReference type="ChEBI" id="CHEBI:59560"/>
        <dbReference type="ChEBI" id="CHEBI:136564"/>
        <dbReference type="EC" id="1.1.1.153"/>
    </reaction>
</comment>
<comment type="subunit">
    <text evidence="1">Homodimer.</text>
</comment>
<comment type="subcellular location">
    <subcellularLocation>
        <location evidence="1">Cytoplasm</location>
    </subcellularLocation>
</comment>
<comment type="similarity">
    <text evidence="2">Belongs to the sepiapterin reductase family.</text>
</comment>
<sequence length="261" mass="28359">MAATGALGSVLCVLTGASRGFGRTLAHLLCPRLLPGSTLLLVSRTEEALKGLAGELAHKYPGVRVRWEAADLGTSEGVSAAVRAAGELQVGAAQKLLIINNAGSIGDVSKMFVDFSDPKEVTDYMMFNVSSPLCLTASLLKTFPRRPDLQRVVVNVSSLAALQPFKSWALYCSGKAARDMIFRVLAEEEKDVRVLNYAPGPLDTDMHVVARTQTADPELRRFLMDRKEKGKMVDIQVSAKKMLDLLEADAYKSGDHIDFFD</sequence>
<organism>
    <name type="scientific">Xenopus tropicalis</name>
    <name type="common">Western clawed frog</name>
    <name type="synonym">Silurana tropicalis</name>
    <dbReference type="NCBI Taxonomy" id="8364"/>
    <lineage>
        <taxon>Eukaryota</taxon>
        <taxon>Metazoa</taxon>
        <taxon>Chordata</taxon>
        <taxon>Craniata</taxon>
        <taxon>Vertebrata</taxon>
        <taxon>Euteleostomi</taxon>
        <taxon>Amphibia</taxon>
        <taxon>Batrachia</taxon>
        <taxon>Anura</taxon>
        <taxon>Pipoidea</taxon>
        <taxon>Pipidae</taxon>
        <taxon>Xenopodinae</taxon>
        <taxon>Xenopus</taxon>
        <taxon>Silurana</taxon>
    </lineage>
</organism>
<evidence type="ECO:0000250" key="1"/>
<evidence type="ECO:0000305" key="2"/>
<proteinExistence type="evidence at transcript level"/>
<reference key="1">
    <citation type="submission" date="2008-01" db="EMBL/GenBank/DDBJ databases">
        <authorList>
            <consortium name="NIH - Xenopus Gene Collection (XGC) project"/>
        </authorList>
    </citation>
    <scope>NUCLEOTIDE SEQUENCE [LARGE SCALE MRNA]</scope>
    <source>
        <tissue>Testis</tissue>
    </source>
</reference>
<dbReference type="EC" id="1.1.1.153"/>
<dbReference type="EMBL" id="BC158483">
    <property type="protein sequence ID" value="AAI58484.1"/>
    <property type="molecule type" value="mRNA"/>
</dbReference>
<dbReference type="RefSeq" id="NP_001120067.1">
    <property type="nucleotide sequence ID" value="NM_001126595.1"/>
</dbReference>
<dbReference type="SMR" id="B0BML7"/>
<dbReference type="FunCoup" id="B0BML7">
    <property type="interactions" value="812"/>
</dbReference>
<dbReference type="STRING" id="8364.ENSXETP00000018647"/>
<dbReference type="PaxDb" id="8364-ENSXETP00000060132"/>
<dbReference type="GeneID" id="100145068"/>
<dbReference type="KEGG" id="xtr:100145068"/>
<dbReference type="AGR" id="Xenbase:XB-GENE-977814"/>
<dbReference type="CTD" id="6697"/>
<dbReference type="eggNOG" id="KOG1204">
    <property type="taxonomic scope" value="Eukaryota"/>
</dbReference>
<dbReference type="InParanoid" id="B0BML7"/>
<dbReference type="OrthoDB" id="153074at2759"/>
<dbReference type="Proteomes" id="UP000008143">
    <property type="component" value="Chromosome 1"/>
</dbReference>
<dbReference type="GO" id="GO:0005737">
    <property type="term" value="C:cytoplasm"/>
    <property type="evidence" value="ECO:0007669"/>
    <property type="project" value="UniProtKB-SubCell"/>
</dbReference>
<dbReference type="GO" id="GO:0004757">
    <property type="term" value="F:sepiapterin reductase (NADP+) activity"/>
    <property type="evidence" value="ECO:0000250"/>
    <property type="project" value="UniProtKB"/>
</dbReference>
<dbReference type="GO" id="GO:0006729">
    <property type="term" value="P:tetrahydrobiopterin biosynthetic process"/>
    <property type="evidence" value="ECO:0007669"/>
    <property type="project" value="InterPro"/>
</dbReference>
<dbReference type="CDD" id="cd05367">
    <property type="entry name" value="SPR-like_SDR_c"/>
    <property type="match status" value="1"/>
</dbReference>
<dbReference type="FunFam" id="3.40.50.720:FF:000259">
    <property type="entry name" value="Sepiapterin reductase"/>
    <property type="match status" value="1"/>
</dbReference>
<dbReference type="Gene3D" id="3.40.50.720">
    <property type="entry name" value="NAD(P)-binding Rossmann-like Domain"/>
    <property type="match status" value="1"/>
</dbReference>
<dbReference type="InterPro" id="IPR051721">
    <property type="entry name" value="Biopterin_syn/organic_redct"/>
</dbReference>
<dbReference type="InterPro" id="IPR036291">
    <property type="entry name" value="NAD(P)-bd_dom_sf"/>
</dbReference>
<dbReference type="InterPro" id="IPR002347">
    <property type="entry name" value="SDR_fam"/>
</dbReference>
<dbReference type="InterPro" id="IPR006393">
    <property type="entry name" value="Sepiapterin_red"/>
</dbReference>
<dbReference type="NCBIfam" id="TIGR01500">
    <property type="entry name" value="sepiapter_red"/>
    <property type="match status" value="1"/>
</dbReference>
<dbReference type="PANTHER" id="PTHR44085">
    <property type="entry name" value="SEPIAPTERIN REDUCTASE"/>
    <property type="match status" value="1"/>
</dbReference>
<dbReference type="PANTHER" id="PTHR44085:SF2">
    <property type="entry name" value="SEPIAPTERIN REDUCTASE"/>
    <property type="match status" value="1"/>
</dbReference>
<dbReference type="Pfam" id="PF00106">
    <property type="entry name" value="adh_short"/>
    <property type="match status" value="1"/>
</dbReference>
<dbReference type="PRINTS" id="PR00081">
    <property type="entry name" value="GDHRDH"/>
</dbReference>
<dbReference type="SUPFAM" id="SSF51735">
    <property type="entry name" value="NAD(P)-binding Rossmann-fold domains"/>
    <property type="match status" value="1"/>
</dbReference>
<gene>
    <name type="primary">spr</name>
</gene>
<keyword id="KW-0963">Cytoplasm</keyword>
<keyword id="KW-0521">NADP</keyword>
<keyword id="KW-0560">Oxidoreductase</keyword>
<keyword id="KW-1185">Reference proteome</keyword>